<evidence type="ECO:0000250" key="1"/>
<evidence type="ECO:0000255" key="2">
    <source>
        <dbReference type="PROSITE-ProRule" id="PRU01067"/>
    </source>
</evidence>
<evidence type="ECO:0000305" key="3"/>
<comment type="function">
    <text evidence="1">Catalyzes both the ATP-dependent activation of exogenously supplied lipoate to lipoyl-AMP and the transfer of the activated lipoyl onto the lipoyl domains of lipoate-dependent enzymes.</text>
</comment>
<comment type="catalytic activity">
    <reaction>
        <text>L-lysyl-[lipoyl-carrier protein] + (R)-lipoate + ATP = N(6)-[(R)-lipoyl]-L-lysyl-[lipoyl-carrier protein] + AMP + diphosphate + H(+)</text>
        <dbReference type="Rhea" id="RHEA:49288"/>
        <dbReference type="Rhea" id="RHEA-COMP:10500"/>
        <dbReference type="Rhea" id="RHEA-COMP:10502"/>
        <dbReference type="ChEBI" id="CHEBI:15378"/>
        <dbReference type="ChEBI" id="CHEBI:29969"/>
        <dbReference type="ChEBI" id="CHEBI:30616"/>
        <dbReference type="ChEBI" id="CHEBI:33019"/>
        <dbReference type="ChEBI" id="CHEBI:83088"/>
        <dbReference type="ChEBI" id="CHEBI:83099"/>
        <dbReference type="ChEBI" id="CHEBI:456215"/>
        <dbReference type="EC" id="6.3.1.20"/>
    </reaction>
</comment>
<comment type="pathway">
    <text>Protein modification; protein lipoylation via exogenous pathway; protein N(6)-(lipoyl)lysine from lipoate: step 1/2.</text>
</comment>
<comment type="pathway">
    <text>Protein modification; protein lipoylation via exogenous pathway; protein N(6)-(lipoyl)lysine from lipoate: step 2/2.</text>
</comment>
<comment type="subunit">
    <text evidence="1">Monomer.</text>
</comment>
<comment type="subcellular location">
    <subcellularLocation>
        <location evidence="1">Cytoplasm</location>
    </subcellularLocation>
</comment>
<comment type="miscellaneous">
    <text evidence="1">In the transfer reaction, the free carboxyl group of lipoic acid is attached via an amide linkage to the epsilon-amino group of a specific lysine residue of lipoyl domains of lipoate-dependent enzymes.</text>
</comment>
<comment type="similarity">
    <text evidence="3">Belongs to the LplA family.</text>
</comment>
<accession>Q9Y9E6</accession>
<dbReference type="EC" id="6.3.1.20"/>
<dbReference type="EMBL" id="BA000002">
    <property type="protein sequence ID" value="BAA81354.1"/>
    <property type="molecule type" value="Genomic_DNA"/>
</dbReference>
<dbReference type="PIR" id="B72462">
    <property type="entry name" value="B72462"/>
</dbReference>
<dbReference type="RefSeq" id="WP_010866952.1">
    <property type="nucleotide sequence ID" value="NC_000854.2"/>
</dbReference>
<dbReference type="SMR" id="Q9Y9E6"/>
<dbReference type="STRING" id="272557.APE_2341"/>
<dbReference type="EnsemblBacteria" id="BAA81354">
    <property type="protein sequence ID" value="BAA81354"/>
    <property type="gene ID" value="APE_2341"/>
</dbReference>
<dbReference type="GeneID" id="1445362"/>
<dbReference type="KEGG" id="ape:APE_2341"/>
<dbReference type="PATRIC" id="fig|272557.25.peg.1565"/>
<dbReference type="eggNOG" id="arCOG01939">
    <property type="taxonomic scope" value="Archaea"/>
</dbReference>
<dbReference type="UniPathway" id="UPA00537">
    <property type="reaction ID" value="UER00594"/>
</dbReference>
<dbReference type="UniPathway" id="UPA00537">
    <property type="reaction ID" value="UER00595"/>
</dbReference>
<dbReference type="Proteomes" id="UP000002518">
    <property type="component" value="Chromosome"/>
</dbReference>
<dbReference type="GO" id="GO:0005737">
    <property type="term" value="C:cytoplasm"/>
    <property type="evidence" value="ECO:0007669"/>
    <property type="project" value="UniProtKB-SubCell"/>
</dbReference>
<dbReference type="GO" id="GO:0005524">
    <property type="term" value="F:ATP binding"/>
    <property type="evidence" value="ECO:0007669"/>
    <property type="project" value="UniProtKB-KW"/>
</dbReference>
<dbReference type="GO" id="GO:0016979">
    <property type="term" value="F:lipoate-protein ligase activity"/>
    <property type="evidence" value="ECO:0007669"/>
    <property type="project" value="UniProtKB-EC"/>
</dbReference>
<dbReference type="GO" id="GO:0017118">
    <property type="term" value="F:lipoyltransferase activity"/>
    <property type="evidence" value="ECO:0007669"/>
    <property type="project" value="TreeGrafter"/>
</dbReference>
<dbReference type="GO" id="GO:0036211">
    <property type="term" value="P:protein modification process"/>
    <property type="evidence" value="ECO:0007669"/>
    <property type="project" value="InterPro"/>
</dbReference>
<dbReference type="CDD" id="cd16443">
    <property type="entry name" value="LplA"/>
    <property type="match status" value="1"/>
</dbReference>
<dbReference type="Gene3D" id="3.30.930.10">
    <property type="entry name" value="Bira Bifunctional Protein, Domain 2"/>
    <property type="match status" value="1"/>
</dbReference>
<dbReference type="InterPro" id="IPR045864">
    <property type="entry name" value="aa-tRNA-synth_II/BPL/LPL"/>
</dbReference>
<dbReference type="InterPro" id="IPR004143">
    <property type="entry name" value="BPL_LPL_catalytic"/>
</dbReference>
<dbReference type="InterPro" id="IPR004562">
    <property type="entry name" value="LipoylTrfase_LipoateP_Ligase"/>
</dbReference>
<dbReference type="PANTHER" id="PTHR12561">
    <property type="entry name" value="LIPOATE-PROTEIN LIGASE"/>
    <property type="match status" value="1"/>
</dbReference>
<dbReference type="PANTHER" id="PTHR12561:SF3">
    <property type="entry name" value="LIPOYLTRANSFERASE 1, MITOCHONDRIAL"/>
    <property type="match status" value="1"/>
</dbReference>
<dbReference type="Pfam" id="PF21948">
    <property type="entry name" value="LplA-B_cat"/>
    <property type="match status" value="1"/>
</dbReference>
<dbReference type="SUPFAM" id="SSF55681">
    <property type="entry name" value="Class II aaRS and biotin synthetases"/>
    <property type="match status" value="1"/>
</dbReference>
<dbReference type="PROSITE" id="PS51733">
    <property type="entry name" value="BPL_LPL_CATALYTIC"/>
    <property type="match status" value="1"/>
</dbReference>
<organism>
    <name type="scientific">Aeropyrum pernix (strain ATCC 700893 / DSM 11879 / JCM 9820 / NBRC 100138 / K1)</name>
    <dbReference type="NCBI Taxonomy" id="272557"/>
    <lineage>
        <taxon>Archaea</taxon>
        <taxon>Thermoproteota</taxon>
        <taxon>Thermoprotei</taxon>
        <taxon>Desulfurococcales</taxon>
        <taxon>Desulfurococcaceae</taxon>
        <taxon>Aeropyrum</taxon>
    </lineage>
</organism>
<gene>
    <name type="primary">lplA</name>
    <name type="synonym">lipB</name>
    <name type="ordered locus">APE_2341</name>
</gene>
<sequence>MILKTTGGSPHFNIALEEALLEESAEHGIAIARLWVNPDSIIVGYTSDVGREVNIEQARAEGVPVVRRISGGGAVFHDLGNMNVSVYIPRRLGVDEAYALVTSIILKTLHRLGIEGRVENGNDVAVGPWKVSGSAAAIRARATLAHATLLLTTDPSRIRRLVIPQLHRVERGEVTPVKYNPNSLERITGERMEVWQAARLLEESVKHALGEPENVGRDILQEAVIRARELCKTKYSQKGFWSPLGLGACREPQVAPMTSPSYVL</sequence>
<protein>
    <recommendedName>
        <fullName>Putative lipoate-protein ligase A</fullName>
        <shortName>Lipoate--protein ligase</shortName>
        <ecNumber>6.3.1.20</ecNumber>
    </recommendedName>
</protein>
<proteinExistence type="inferred from homology"/>
<feature type="chain" id="PRO_0000062902" description="Putative lipoate-protein ligase A">
    <location>
        <begin position="1"/>
        <end position="264"/>
    </location>
</feature>
<feature type="domain" description="BPL/LPL catalytic" evidence="2">
    <location>
        <begin position="26"/>
        <end position="213"/>
    </location>
</feature>
<feature type="binding site" evidence="1">
    <location>
        <position position="68"/>
    </location>
    <ligand>
        <name>ATP</name>
        <dbReference type="ChEBI" id="CHEBI:30616"/>
    </ligand>
</feature>
<feature type="binding site" evidence="1">
    <location>
        <begin position="73"/>
        <end position="76"/>
    </location>
    <ligand>
        <name>ATP</name>
        <dbReference type="ChEBI" id="CHEBI:30616"/>
    </ligand>
</feature>
<feature type="binding site" evidence="1">
    <location>
        <position position="130"/>
    </location>
    <ligand>
        <name>(R)-lipoate</name>
        <dbReference type="ChEBI" id="CHEBI:83088"/>
    </ligand>
</feature>
<feature type="binding site" evidence="1">
    <location>
        <position position="130"/>
    </location>
    <ligand>
        <name>ATP</name>
        <dbReference type="ChEBI" id="CHEBI:30616"/>
    </ligand>
</feature>
<name>LPLA_AERPE</name>
<keyword id="KW-0067">ATP-binding</keyword>
<keyword id="KW-0963">Cytoplasm</keyword>
<keyword id="KW-0436">Ligase</keyword>
<keyword id="KW-0547">Nucleotide-binding</keyword>
<keyword id="KW-1185">Reference proteome</keyword>
<reference key="1">
    <citation type="journal article" date="1999" name="DNA Res.">
        <title>Complete genome sequence of an aerobic hyper-thermophilic crenarchaeon, Aeropyrum pernix K1.</title>
        <authorList>
            <person name="Kawarabayasi Y."/>
            <person name="Hino Y."/>
            <person name="Horikawa H."/>
            <person name="Yamazaki S."/>
            <person name="Haikawa Y."/>
            <person name="Jin-no K."/>
            <person name="Takahashi M."/>
            <person name="Sekine M."/>
            <person name="Baba S."/>
            <person name="Ankai A."/>
            <person name="Kosugi H."/>
            <person name="Hosoyama A."/>
            <person name="Fukui S."/>
            <person name="Nagai Y."/>
            <person name="Nishijima K."/>
            <person name="Nakazawa H."/>
            <person name="Takamiya M."/>
            <person name="Masuda S."/>
            <person name="Funahashi T."/>
            <person name="Tanaka T."/>
            <person name="Kudoh Y."/>
            <person name="Yamazaki J."/>
            <person name="Kushida N."/>
            <person name="Oguchi A."/>
            <person name="Aoki K."/>
            <person name="Kubota K."/>
            <person name="Nakamura Y."/>
            <person name="Nomura N."/>
            <person name="Sako Y."/>
            <person name="Kikuchi H."/>
        </authorList>
    </citation>
    <scope>NUCLEOTIDE SEQUENCE [LARGE SCALE GENOMIC DNA]</scope>
    <source>
        <strain>ATCC 700893 / DSM 11879 / JCM 9820 / NBRC 100138 / K1</strain>
    </source>
</reference>